<feature type="chain" id="PRO_0000386275" description="GTPase Obg">
    <location>
        <begin position="1"/>
        <end position="430"/>
    </location>
</feature>
<feature type="domain" description="Obg" evidence="3">
    <location>
        <begin position="1"/>
        <end position="158"/>
    </location>
</feature>
<feature type="domain" description="OBG-type G" evidence="1">
    <location>
        <begin position="159"/>
        <end position="329"/>
    </location>
</feature>
<feature type="domain" description="OCT" evidence="2">
    <location>
        <begin position="352"/>
        <end position="430"/>
    </location>
</feature>
<feature type="region of interest" description="Disordered" evidence="4">
    <location>
        <begin position="118"/>
        <end position="145"/>
    </location>
</feature>
<feature type="binding site" evidence="1">
    <location>
        <begin position="165"/>
        <end position="172"/>
    </location>
    <ligand>
        <name>GTP</name>
        <dbReference type="ChEBI" id="CHEBI:37565"/>
    </ligand>
</feature>
<feature type="binding site" evidence="1">
    <location>
        <position position="172"/>
    </location>
    <ligand>
        <name>Mg(2+)</name>
        <dbReference type="ChEBI" id="CHEBI:18420"/>
    </ligand>
</feature>
<feature type="binding site" evidence="1">
    <location>
        <begin position="190"/>
        <end position="194"/>
    </location>
    <ligand>
        <name>GTP</name>
        <dbReference type="ChEBI" id="CHEBI:37565"/>
    </ligand>
</feature>
<feature type="binding site" evidence="1">
    <location>
        <position position="192"/>
    </location>
    <ligand>
        <name>Mg(2+)</name>
        <dbReference type="ChEBI" id="CHEBI:18420"/>
    </ligand>
</feature>
<feature type="binding site" evidence="1">
    <location>
        <begin position="212"/>
        <end position="215"/>
    </location>
    <ligand>
        <name>GTP</name>
        <dbReference type="ChEBI" id="CHEBI:37565"/>
    </ligand>
</feature>
<feature type="binding site" evidence="1">
    <location>
        <begin position="282"/>
        <end position="285"/>
    </location>
    <ligand>
        <name>GTP</name>
        <dbReference type="ChEBI" id="CHEBI:37565"/>
    </ligand>
</feature>
<feature type="binding site" evidence="1">
    <location>
        <begin position="310"/>
        <end position="312"/>
    </location>
    <ligand>
        <name>GTP</name>
        <dbReference type="ChEBI" id="CHEBI:37565"/>
    </ligand>
</feature>
<name>OBG_STAAM</name>
<evidence type="ECO:0000255" key="1">
    <source>
        <dbReference type="HAMAP-Rule" id="MF_01454"/>
    </source>
</evidence>
<evidence type="ECO:0000255" key="2">
    <source>
        <dbReference type="PROSITE-ProRule" id="PRU01229"/>
    </source>
</evidence>
<evidence type="ECO:0000255" key="3">
    <source>
        <dbReference type="PROSITE-ProRule" id="PRU01231"/>
    </source>
</evidence>
<evidence type="ECO:0000256" key="4">
    <source>
        <dbReference type="SAM" id="MobiDB-lite"/>
    </source>
</evidence>
<comment type="function">
    <text evidence="1">An essential GTPase which binds GTP, GDP and possibly (p)ppGpp with moderate affinity, with high nucleotide exchange rates and a fairly low GTP hydrolysis rate. Plays a role in control of the cell cycle, stress response, ribosome biogenesis and in those bacteria that undergo differentiation, in morphogenesis control.</text>
</comment>
<comment type="cofactor">
    <cofactor evidence="1">
        <name>Mg(2+)</name>
        <dbReference type="ChEBI" id="CHEBI:18420"/>
    </cofactor>
</comment>
<comment type="subunit">
    <text evidence="1">Monomer.</text>
</comment>
<comment type="subcellular location">
    <subcellularLocation>
        <location evidence="1">Cytoplasm</location>
    </subcellularLocation>
</comment>
<comment type="similarity">
    <text evidence="1">Belongs to the TRAFAC class OBG-HflX-like GTPase superfamily. OBG GTPase family.</text>
</comment>
<organism>
    <name type="scientific">Staphylococcus aureus (strain Mu50 / ATCC 700699)</name>
    <dbReference type="NCBI Taxonomy" id="158878"/>
    <lineage>
        <taxon>Bacteria</taxon>
        <taxon>Bacillati</taxon>
        <taxon>Bacillota</taxon>
        <taxon>Bacilli</taxon>
        <taxon>Bacillales</taxon>
        <taxon>Staphylococcaceae</taxon>
        <taxon>Staphylococcus</taxon>
    </lineage>
</organism>
<reference key="1">
    <citation type="journal article" date="2001" name="Lancet">
        <title>Whole genome sequencing of meticillin-resistant Staphylococcus aureus.</title>
        <authorList>
            <person name="Kuroda M."/>
            <person name="Ohta T."/>
            <person name="Uchiyama I."/>
            <person name="Baba T."/>
            <person name="Yuzawa H."/>
            <person name="Kobayashi I."/>
            <person name="Cui L."/>
            <person name="Oguchi A."/>
            <person name="Aoki K."/>
            <person name="Nagai Y."/>
            <person name="Lian J.-Q."/>
            <person name="Ito T."/>
            <person name="Kanamori M."/>
            <person name="Matsumaru H."/>
            <person name="Maruyama A."/>
            <person name="Murakami H."/>
            <person name="Hosoyama A."/>
            <person name="Mizutani-Ui Y."/>
            <person name="Takahashi N.K."/>
            <person name="Sawano T."/>
            <person name="Inoue R."/>
            <person name="Kaito C."/>
            <person name="Sekimizu K."/>
            <person name="Hirakawa H."/>
            <person name="Kuhara S."/>
            <person name="Goto S."/>
            <person name="Yabuzaki J."/>
            <person name="Kanehisa M."/>
            <person name="Yamashita A."/>
            <person name="Oshima K."/>
            <person name="Furuya K."/>
            <person name="Yoshino C."/>
            <person name="Shiba T."/>
            <person name="Hattori M."/>
            <person name="Ogasawara N."/>
            <person name="Hayashi H."/>
            <person name="Hiramatsu K."/>
        </authorList>
    </citation>
    <scope>NUCLEOTIDE SEQUENCE [LARGE SCALE GENOMIC DNA]</scope>
    <source>
        <strain>Mu50 / ATCC 700699</strain>
    </source>
</reference>
<dbReference type="EC" id="3.6.5.-" evidence="1"/>
<dbReference type="EMBL" id="BA000017">
    <property type="protein sequence ID" value="BAB57806.1"/>
    <property type="molecule type" value="Genomic_DNA"/>
</dbReference>
<dbReference type="SMR" id="Q99TK9"/>
<dbReference type="KEGG" id="sav:SAV1644"/>
<dbReference type="HOGENOM" id="CLU_011747_2_1_9"/>
<dbReference type="PhylomeDB" id="Q99TK9"/>
<dbReference type="Proteomes" id="UP000002481">
    <property type="component" value="Chromosome"/>
</dbReference>
<dbReference type="GO" id="GO:0005737">
    <property type="term" value="C:cytoplasm"/>
    <property type="evidence" value="ECO:0007669"/>
    <property type="project" value="UniProtKB-SubCell"/>
</dbReference>
<dbReference type="GO" id="GO:0005525">
    <property type="term" value="F:GTP binding"/>
    <property type="evidence" value="ECO:0007669"/>
    <property type="project" value="UniProtKB-UniRule"/>
</dbReference>
<dbReference type="GO" id="GO:0003924">
    <property type="term" value="F:GTPase activity"/>
    <property type="evidence" value="ECO:0007669"/>
    <property type="project" value="UniProtKB-UniRule"/>
</dbReference>
<dbReference type="GO" id="GO:0000287">
    <property type="term" value="F:magnesium ion binding"/>
    <property type="evidence" value="ECO:0007669"/>
    <property type="project" value="InterPro"/>
</dbReference>
<dbReference type="GO" id="GO:0042254">
    <property type="term" value="P:ribosome biogenesis"/>
    <property type="evidence" value="ECO:0007669"/>
    <property type="project" value="UniProtKB-UniRule"/>
</dbReference>
<dbReference type="CDD" id="cd01898">
    <property type="entry name" value="Obg"/>
    <property type="match status" value="1"/>
</dbReference>
<dbReference type="FunFam" id="2.70.210.12:FF:000001">
    <property type="entry name" value="GTPase Obg"/>
    <property type="match status" value="1"/>
</dbReference>
<dbReference type="FunFam" id="3.40.50.300:FF:000515">
    <property type="entry name" value="GTPase Obg"/>
    <property type="match status" value="1"/>
</dbReference>
<dbReference type="Gene3D" id="3.30.300.350">
    <property type="entry name" value="GTP-binding protein OBG, C-terminal domain"/>
    <property type="match status" value="1"/>
</dbReference>
<dbReference type="Gene3D" id="2.70.210.12">
    <property type="entry name" value="GTP1/OBG domain"/>
    <property type="match status" value="1"/>
</dbReference>
<dbReference type="Gene3D" id="3.40.50.300">
    <property type="entry name" value="P-loop containing nucleotide triphosphate hydrolases"/>
    <property type="match status" value="1"/>
</dbReference>
<dbReference type="HAMAP" id="MF_01454">
    <property type="entry name" value="GTPase_Obg"/>
    <property type="match status" value="1"/>
</dbReference>
<dbReference type="InterPro" id="IPR031167">
    <property type="entry name" value="G_OBG"/>
</dbReference>
<dbReference type="InterPro" id="IPR006073">
    <property type="entry name" value="GTP-bd"/>
</dbReference>
<dbReference type="InterPro" id="IPR014100">
    <property type="entry name" value="GTP-bd_Obg/CgtA"/>
</dbReference>
<dbReference type="InterPro" id="IPR036346">
    <property type="entry name" value="GTP-bd_prot_GTP1/OBG_C_sf"/>
</dbReference>
<dbReference type="InterPro" id="IPR006074">
    <property type="entry name" value="GTP1-OBG_CS"/>
</dbReference>
<dbReference type="InterPro" id="IPR006169">
    <property type="entry name" value="GTP1_OBG_dom"/>
</dbReference>
<dbReference type="InterPro" id="IPR036726">
    <property type="entry name" value="GTP1_OBG_dom_sf"/>
</dbReference>
<dbReference type="InterPro" id="IPR045086">
    <property type="entry name" value="OBG_GTPase"/>
</dbReference>
<dbReference type="InterPro" id="IPR015349">
    <property type="entry name" value="OCT_dom"/>
</dbReference>
<dbReference type="InterPro" id="IPR027417">
    <property type="entry name" value="P-loop_NTPase"/>
</dbReference>
<dbReference type="NCBIfam" id="TIGR02729">
    <property type="entry name" value="Obg_CgtA"/>
    <property type="match status" value="1"/>
</dbReference>
<dbReference type="NCBIfam" id="TIGR03595">
    <property type="entry name" value="Obg_CgtA_exten"/>
    <property type="match status" value="1"/>
</dbReference>
<dbReference type="NCBIfam" id="NF008954">
    <property type="entry name" value="PRK12296.1"/>
    <property type="match status" value="1"/>
</dbReference>
<dbReference type="NCBIfam" id="NF008955">
    <property type="entry name" value="PRK12297.1"/>
    <property type="match status" value="1"/>
</dbReference>
<dbReference type="NCBIfam" id="NF008956">
    <property type="entry name" value="PRK12299.1"/>
    <property type="match status" value="1"/>
</dbReference>
<dbReference type="PANTHER" id="PTHR11702">
    <property type="entry name" value="DEVELOPMENTALLY REGULATED GTP-BINDING PROTEIN-RELATED"/>
    <property type="match status" value="1"/>
</dbReference>
<dbReference type="PANTHER" id="PTHR11702:SF31">
    <property type="entry name" value="MITOCHONDRIAL RIBOSOME-ASSOCIATED GTPASE 2"/>
    <property type="match status" value="1"/>
</dbReference>
<dbReference type="Pfam" id="PF09269">
    <property type="entry name" value="DUF1967"/>
    <property type="match status" value="1"/>
</dbReference>
<dbReference type="Pfam" id="PF01018">
    <property type="entry name" value="GTP1_OBG"/>
    <property type="match status" value="1"/>
</dbReference>
<dbReference type="Pfam" id="PF01926">
    <property type="entry name" value="MMR_HSR1"/>
    <property type="match status" value="1"/>
</dbReference>
<dbReference type="PIRSF" id="PIRSF002401">
    <property type="entry name" value="GTP_bd_Obg/CgtA"/>
    <property type="match status" value="1"/>
</dbReference>
<dbReference type="PRINTS" id="PR00326">
    <property type="entry name" value="GTP1OBG"/>
</dbReference>
<dbReference type="SUPFAM" id="SSF102741">
    <property type="entry name" value="Obg GTP-binding protein C-terminal domain"/>
    <property type="match status" value="1"/>
</dbReference>
<dbReference type="SUPFAM" id="SSF82051">
    <property type="entry name" value="Obg GTP-binding protein N-terminal domain"/>
    <property type="match status" value="1"/>
</dbReference>
<dbReference type="SUPFAM" id="SSF52540">
    <property type="entry name" value="P-loop containing nucleoside triphosphate hydrolases"/>
    <property type="match status" value="1"/>
</dbReference>
<dbReference type="PROSITE" id="PS51710">
    <property type="entry name" value="G_OBG"/>
    <property type="match status" value="1"/>
</dbReference>
<dbReference type="PROSITE" id="PS00905">
    <property type="entry name" value="GTP1_OBG"/>
    <property type="match status" value="1"/>
</dbReference>
<dbReference type="PROSITE" id="PS51883">
    <property type="entry name" value="OBG"/>
    <property type="match status" value="1"/>
</dbReference>
<dbReference type="PROSITE" id="PS51881">
    <property type="entry name" value="OCT"/>
    <property type="match status" value="1"/>
</dbReference>
<gene>
    <name evidence="1" type="primary">obg</name>
    <name type="ordered locus">SAV1644</name>
</gene>
<proteinExistence type="inferred from homology"/>
<accession>Q99TK9</accession>
<sequence>MFVDQVKISLKAGDGGNGITAYRREKYVPFGGPAGGDGGKGASVVFEVDEGLRTLLDFRYQRHFKASKGENGQSSNMHGKNAEDLVLKVPPGTIIKNVETDEVLADLVEDGQRAVVAKGGRGGRGNSRFATPRNPAPDFSEKGEPGEELDVSLELKLLADVGLVGFPSVGKSTLLSIVSKAKPKIGAYHFTTIKPNLGVVSTPDQRSFVMADLPGLIEGASDGVGLGHQFLRHVERTKVIVHMIDMSGSEGREPIEDYKVINQELAAYEQRLEDRPQIVVANKMDLPESQDNLNLFKEEIGEDVPVIPVSTITRDNIDQLLYAIADKLEEYKDVDFTVEEEESVGINRVLYKHTPSQDKFTISRDDDGAYVVSGNAIERMFKMTDFNSDPAVRRFARQMRSMGIDDALRERGCKNGDIVRILGGEFEFVE</sequence>
<keyword id="KW-0963">Cytoplasm</keyword>
<keyword id="KW-0342">GTP-binding</keyword>
<keyword id="KW-0378">Hydrolase</keyword>
<keyword id="KW-0460">Magnesium</keyword>
<keyword id="KW-0479">Metal-binding</keyword>
<keyword id="KW-0547">Nucleotide-binding</keyword>
<protein>
    <recommendedName>
        <fullName evidence="1">GTPase Obg</fullName>
        <ecNumber evidence="1">3.6.5.-</ecNumber>
    </recommendedName>
    <alternativeName>
        <fullName evidence="1">GTP-binding protein Obg</fullName>
    </alternativeName>
</protein>